<comment type="subcellular location">
    <subcellularLocation>
        <location>Secreted</location>
    </subcellularLocation>
</comment>
<comment type="domain">
    <text>Avian ovomucoid consists of three homologous, tandem Kazal family inhibitory domains.</text>
</comment>
<proteinExistence type="evidence at protein level"/>
<protein>
    <recommendedName>
        <fullName>Ovomucoid</fullName>
    </recommendedName>
</protein>
<name>IOVO_NETRU</name>
<evidence type="ECO:0000255" key="1"/>
<evidence type="ECO:0000255" key="2">
    <source>
        <dbReference type="PROSITE-ProRule" id="PRU00798"/>
    </source>
</evidence>
<dbReference type="PIR" id="I61587">
    <property type="entry name" value="I61587"/>
</dbReference>
<dbReference type="SMR" id="P68392"/>
<dbReference type="GO" id="GO:0005576">
    <property type="term" value="C:extracellular region"/>
    <property type="evidence" value="ECO:0007669"/>
    <property type="project" value="UniProtKB-SubCell"/>
</dbReference>
<dbReference type="GO" id="GO:0004867">
    <property type="term" value="F:serine-type endopeptidase inhibitor activity"/>
    <property type="evidence" value="ECO:0007669"/>
    <property type="project" value="UniProtKB-KW"/>
</dbReference>
<dbReference type="CDD" id="cd00104">
    <property type="entry name" value="KAZAL_FS"/>
    <property type="match status" value="1"/>
</dbReference>
<dbReference type="FunFam" id="3.30.60.30:FF:000037">
    <property type="entry name" value="Ovomucoid"/>
    <property type="match status" value="1"/>
</dbReference>
<dbReference type="Gene3D" id="3.30.60.30">
    <property type="match status" value="1"/>
</dbReference>
<dbReference type="InterPro" id="IPR051597">
    <property type="entry name" value="Bifunctional_prot_inhibitor"/>
</dbReference>
<dbReference type="InterPro" id="IPR002350">
    <property type="entry name" value="Kazal_dom"/>
</dbReference>
<dbReference type="InterPro" id="IPR036058">
    <property type="entry name" value="Kazal_dom_sf"/>
</dbReference>
<dbReference type="InterPro" id="IPR001239">
    <property type="entry name" value="Prot_inh_Kazal-m"/>
</dbReference>
<dbReference type="PANTHER" id="PTHR47729:SF1">
    <property type="entry name" value="OVOMUCOID-LIKE-RELATED"/>
    <property type="match status" value="1"/>
</dbReference>
<dbReference type="PANTHER" id="PTHR47729">
    <property type="entry name" value="SERINE PEPTIDASE INHIBITOR, KAZAL TYPE 2, TANDEM DUPLICATE 1-RELATED"/>
    <property type="match status" value="1"/>
</dbReference>
<dbReference type="Pfam" id="PF00050">
    <property type="entry name" value="Kazal_1"/>
    <property type="match status" value="1"/>
</dbReference>
<dbReference type="PRINTS" id="PR00290">
    <property type="entry name" value="KAZALINHBTR"/>
</dbReference>
<dbReference type="SMART" id="SM00280">
    <property type="entry name" value="KAZAL"/>
    <property type="match status" value="1"/>
</dbReference>
<dbReference type="SUPFAM" id="SSF100895">
    <property type="entry name" value="Kazal-type serine protease inhibitors"/>
    <property type="match status" value="1"/>
</dbReference>
<dbReference type="PROSITE" id="PS00282">
    <property type="entry name" value="KAZAL_1"/>
    <property type="match status" value="1"/>
</dbReference>
<dbReference type="PROSITE" id="PS51465">
    <property type="entry name" value="KAZAL_2"/>
    <property type="match status" value="1"/>
</dbReference>
<sequence>VATVNCSGYPKPACTMEYMPLCGSDNKTYGNKCNFCNAVVDSNGTLTLSHFGEC</sequence>
<feature type="chain" id="PRO_0000073146" description="Ovomucoid">
    <location>
        <begin position="1" status="less than"/>
        <end position="54" status="greater than"/>
    </location>
</feature>
<feature type="domain" description="Kazal-like" evidence="2">
    <location>
        <begin position="4"/>
        <end position="54"/>
    </location>
</feature>
<feature type="site" description="Reactive bond 3">
    <location>
        <begin position="16"/>
        <end position="17"/>
    </location>
</feature>
<feature type="glycosylation site" description="N-linked (GlcNAc...) asparagine" evidence="1">
    <location>
        <position position="43"/>
    </location>
</feature>
<feature type="disulfide bond">
    <location>
        <begin position="6"/>
        <end position="36"/>
    </location>
</feature>
<feature type="disulfide bond">
    <location>
        <begin position="14"/>
        <end position="33"/>
    </location>
</feature>
<feature type="disulfide bond">
    <location>
        <begin position="22"/>
        <end position="54"/>
    </location>
</feature>
<feature type="non-terminal residue">
    <location>
        <position position="1"/>
    </location>
</feature>
<feature type="non-terminal residue">
    <location>
        <position position="54"/>
    </location>
</feature>
<reference key="1">
    <citation type="journal article" date="1993" name="J. Protein Chem.">
        <title>Amino acid sequences of ovomucoid third domains from 27 additional species of birds.</title>
        <authorList>
            <person name="Apostol I."/>
            <person name="Giletto A."/>
            <person name="Komiyama T."/>
            <person name="Zhang W."/>
            <person name="Laskowski M. Jr."/>
        </authorList>
    </citation>
    <scope>PROTEIN SEQUENCE</scope>
</reference>
<keyword id="KW-0903">Direct protein sequencing</keyword>
<keyword id="KW-1015">Disulfide bond</keyword>
<keyword id="KW-0325">Glycoprotein</keyword>
<keyword id="KW-0646">Protease inhibitor</keyword>
<keyword id="KW-0677">Repeat</keyword>
<keyword id="KW-0964">Secreted</keyword>
<keyword id="KW-0722">Serine protease inhibitor</keyword>
<accession>P68392</accession>
<accession>P52238</accession>
<organism>
    <name type="scientific">Netta rufina</name>
    <name type="common">Red-crested pochard</name>
    <dbReference type="NCBI Taxonomy" id="30387"/>
    <lineage>
        <taxon>Eukaryota</taxon>
        <taxon>Metazoa</taxon>
        <taxon>Chordata</taxon>
        <taxon>Craniata</taxon>
        <taxon>Vertebrata</taxon>
        <taxon>Euteleostomi</taxon>
        <taxon>Archelosauria</taxon>
        <taxon>Archosauria</taxon>
        <taxon>Dinosauria</taxon>
        <taxon>Saurischia</taxon>
        <taxon>Theropoda</taxon>
        <taxon>Coelurosauria</taxon>
        <taxon>Aves</taxon>
        <taxon>Neognathae</taxon>
        <taxon>Galloanserae</taxon>
        <taxon>Anseriformes</taxon>
        <taxon>Anatidae</taxon>
        <taxon>Aythyinae</taxon>
        <taxon>Netta</taxon>
    </lineage>
</organism>